<sequence length="122" mass="13156">MASAPAQQPTLTVEQARVVLSEVIQAFSVPENAARMEEARESACNDMGKMLQLVLPVATQIQQEVIKAYGFNNEGEGVLKFARLVKMYETQDPEIAAMSVKLKSLLLPPLSTPPIGSGIPTS</sequence>
<name>C10_DANRE</name>
<protein>
    <recommendedName>
        <fullName>Protein C10</fullName>
    </recommendedName>
</protein>
<reference key="1">
    <citation type="journal article" date="2004" name="Proc. Natl. Acad. Sci. U.S.A.">
        <title>Hematopoietic gene expression profile in zebrafish kidney marrow.</title>
        <authorList>
            <person name="Song H.-D."/>
            <person name="Sun X.-J."/>
            <person name="Deng M."/>
            <person name="Zhang G.-W."/>
            <person name="Zhou Y."/>
            <person name="Wu X.-Y."/>
            <person name="Sheng Y."/>
            <person name="Chen Y."/>
            <person name="Ruan Z."/>
            <person name="Jiang C.-L."/>
            <person name="Fan H.-Y."/>
            <person name="Zon L.I."/>
            <person name="Kanki J.P."/>
            <person name="Liu T.X."/>
            <person name="Look A.T."/>
            <person name="Chen Z."/>
        </authorList>
    </citation>
    <scope>NUCLEOTIDE SEQUENCE [LARGE SCALE MRNA]</scope>
    <source>
        <tissue>Kidney marrow</tissue>
    </source>
</reference>
<reference key="2">
    <citation type="journal article" date="2013" name="Nature">
        <title>The zebrafish reference genome sequence and its relationship to the human genome.</title>
        <authorList>
            <person name="Howe K."/>
            <person name="Clark M.D."/>
            <person name="Torroja C.F."/>
            <person name="Torrance J."/>
            <person name="Berthelot C."/>
            <person name="Muffato M."/>
            <person name="Collins J.E."/>
            <person name="Humphray S."/>
            <person name="McLaren K."/>
            <person name="Matthews L."/>
            <person name="McLaren S."/>
            <person name="Sealy I."/>
            <person name="Caccamo M."/>
            <person name="Churcher C."/>
            <person name="Scott C."/>
            <person name="Barrett J.C."/>
            <person name="Koch R."/>
            <person name="Rauch G.J."/>
            <person name="White S."/>
            <person name="Chow W."/>
            <person name="Kilian B."/>
            <person name="Quintais L.T."/>
            <person name="Guerra-Assuncao J.A."/>
            <person name="Zhou Y."/>
            <person name="Gu Y."/>
            <person name="Yen J."/>
            <person name="Vogel J.H."/>
            <person name="Eyre T."/>
            <person name="Redmond S."/>
            <person name="Banerjee R."/>
            <person name="Chi J."/>
            <person name="Fu B."/>
            <person name="Langley E."/>
            <person name="Maguire S.F."/>
            <person name="Laird G.K."/>
            <person name="Lloyd D."/>
            <person name="Kenyon E."/>
            <person name="Donaldson S."/>
            <person name="Sehra H."/>
            <person name="Almeida-King J."/>
            <person name="Loveland J."/>
            <person name="Trevanion S."/>
            <person name="Jones M."/>
            <person name="Quail M."/>
            <person name="Willey D."/>
            <person name="Hunt A."/>
            <person name="Burton J."/>
            <person name="Sims S."/>
            <person name="McLay K."/>
            <person name="Plumb B."/>
            <person name="Davis J."/>
            <person name="Clee C."/>
            <person name="Oliver K."/>
            <person name="Clark R."/>
            <person name="Riddle C."/>
            <person name="Elliot D."/>
            <person name="Threadgold G."/>
            <person name="Harden G."/>
            <person name="Ware D."/>
            <person name="Begum S."/>
            <person name="Mortimore B."/>
            <person name="Kerry G."/>
            <person name="Heath P."/>
            <person name="Phillimore B."/>
            <person name="Tracey A."/>
            <person name="Corby N."/>
            <person name="Dunn M."/>
            <person name="Johnson C."/>
            <person name="Wood J."/>
            <person name="Clark S."/>
            <person name="Pelan S."/>
            <person name="Griffiths G."/>
            <person name="Smith M."/>
            <person name="Glithero R."/>
            <person name="Howden P."/>
            <person name="Barker N."/>
            <person name="Lloyd C."/>
            <person name="Stevens C."/>
            <person name="Harley J."/>
            <person name="Holt K."/>
            <person name="Panagiotidis G."/>
            <person name="Lovell J."/>
            <person name="Beasley H."/>
            <person name="Henderson C."/>
            <person name="Gordon D."/>
            <person name="Auger K."/>
            <person name="Wright D."/>
            <person name="Collins J."/>
            <person name="Raisen C."/>
            <person name="Dyer L."/>
            <person name="Leung K."/>
            <person name="Robertson L."/>
            <person name="Ambridge K."/>
            <person name="Leongamornlert D."/>
            <person name="McGuire S."/>
            <person name="Gilderthorp R."/>
            <person name="Griffiths C."/>
            <person name="Manthravadi D."/>
            <person name="Nichol S."/>
            <person name="Barker G."/>
            <person name="Whitehead S."/>
            <person name="Kay M."/>
            <person name="Brown J."/>
            <person name="Murnane C."/>
            <person name="Gray E."/>
            <person name="Humphries M."/>
            <person name="Sycamore N."/>
            <person name="Barker D."/>
            <person name="Saunders D."/>
            <person name="Wallis J."/>
            <person name="Babbage A."/>
            <person name="Hammond S."/>
            <person name="Mashreghi-Mohammadi M."/>
            <person name="Barr L."/>
            <person name="Martin S."/>
            <person name="Wray P."/>
            <person name="Ellington A."/>
            <person name="Matthews N."/>
            <person name="Ellwood M."/>
            <person name="Woodmansey R."/>
            <person name="Clark G."/>
            <person name="Cooper J."/>
            <person name="Tromans A."/>
            <person name="Grafham D."/>
            <person name="Skuce C."/>
            <person name="Pandian R."/>
            <person name="Andrews R."/>
            <person name="Harrison E."/>
            <person name="Kimberley A."/>
            <person name="Garnett J."/>
            <person name="Fosker N."/>
            <person name="Hall R."/>
            <person name="Garner P."/>
            <person name="Kelly D."/>
            <person name="Bird C."/>
            <person name="Palmer S."/>
            <person name="Gehring I."/>
            <person name="Berger A."/>
            <person name="Dooley C.M."/>
            <person name="Ersan-Urun Z."/>
            <person name="Eser C."/>
            <person name="Geiger H."/>
            <person name="Geisler M."/>
            <person name="Karotki L."/>
            <person name="Kirn A."/>
            <person name="Konantz J."/>
            <person name="Konantz M."/>
            <person name="Oberlander M."/>
            <person name="Rudolph-Geiger S."/>
            <person name="Teucke M."/>
            <person name="Lanz C."/>
            <person name="Raddatz G."/>
            <person name="Osoegawa K."/>
            <person name="Zhu B."/>
            <person name="Rapp A."/>
            <person name="Widaa S."/>
            <person name="Langford C."/>
            <person name="Yang F."/>
            <person name="Schuster S.C."/>
            <person name="Carter N.P."/>
            <person name="Harrow J."/>
            <person name="Ning Z."/>
            <person name="Herrero J."/>
            <person name="Searle S.M."/>
            <person name="Enright A."/>
            <person name="Geisler R."/>
            <person name="Plasterk R.H."/>
            <person name="Lee C."/>
            <person name="Westerfield M."/>
            <person name="de Jong P.J."/>
            <person name="Zon L.I."/>
            <person name="Postlethwait J.H."/>
            <person name="Nusslein-Volhard C."/>
            <person name="Hubbard T.J."/>
            <person name="Roest Crollius H."/>
            <person name="Rogers J."/>
            <person name="Stemple D.L."/>
        </authorList>
    </citation>
    <scope>NUCLEOTIDE SEQUENCE [LARGE SCALE GENOMIC DNA]</scope>
    <source>
        <strain>Tuebingen</strain>
    </source>
</reference>
<reference key="3">
    <citation type="submission" date="2004-06" db="EMBL/GenBank/DDBJ databases">
        <authorList>
            <consortium name="NIH - Zebrafish Gene Collection (ZGC) project"/>
        </authorList>
    </citation>
    <scope>NUCLEOTIDE SEQUENCE [LARGE SCALE MRNA]</scope>
    <source>
        <tissue>Embryo</tissue>
    </source>
</reference>
<keyword id="KW-0963">Cytoplasm</keyword>
<keyword id="KW-1185">Reference proteome</keyword>
<dbReference type="EMBL" id="BC071485">
    <property type="protein sequence ID" value="AAH71485.1"/>
    <property type="molecule type" value="mRNA"/>
</dbReference>
<dbReference type="EMBL" id="BX465225">
    <property type="protein sequence ID" value="CAI21126.1"/>
    <property type="molecule type" value="Genomic_DNA"/>
</dbReference>
<dbReference type="EMBL" id="AY398355">
    <property type="protein sequence ID" value="AAQ97788.1"/>
    <property type="molecule type" value="mRNA"/>
</dbReference>
<dbReference type="RefSeq" id="NP_997811.1">
    <property type="nucleotide sequence ID" value="NM_212646.1"/>
</dbReference>
<dbReference type="SMR" id="Q6TH01"/>
<dbReference type="FunCoup" id="Q6TH01">
    <property type="interactions" value="1235"/>
</dbReference>
<dbReference type="PaxDb" id="7955-ENSDARP00000044124"/>
<dbReference type="Ensembl" id="ENSDART00000044125">
    <property type="protein sequence ID" value="ENSDARP00000044124"/>
    <property type="gene ID" value="ENSDARG00000030038"/>
</dbReference>
<dbReference type="Ensembl" id="ENSDART00000152418">
    <property type="protein sequence ID" value="ENSDARP00000126596"/>
    <property type="gene ID" value="ENSDARG00000030038"/>
</dbReference>
<dbReference type="GeneID" id="323559"/>
<dbReference type="KEGG" id="dre:323559"/>
<dbReference type="AGR" id="ZFIN:ZDB-GENE-030131-2279"/>
<dbReference type="CTD" id="14790"/>
<dbReference type="ZFIN" id="ZDB-GENE-030131-2279">
    <property type="gene designation" value="grcc10"/>
</dbReference>
<dbReference type="eggNOG" id="ENOG502RYWR">
    <property type="taxonomic scope" value="Eukaryota"/>
</dbReference>
<dbReference type="HOGENOM" id="CLU_144250_1_0_1"/>
<dbReference type="InParanoid" id="Q6TH01"/>
<dbReference type="OMA" id="GNDMMKM"/>
<dbReference type="OrthoDB" id="75738at2759"/>
<dbReference type="PhylomeDB" id="Q6TH01"/>
<dbReference type="TreeFam" id="TF323852"/>
<dbReference type="PRO" id="PR:Q6TH01"/>
<dbReference type="Proteomes" id="UP000000437">
    <property type="component" value="Chromosome 20"/>
</dbReference>
<dbReference type="Bgee" id="ENSDARG00000030038">
    <property type="expression patterns" value="Expressed in mature ovarian follicle and 27 other cell types or tissues"/>
</dbReference>
<dbReference type="GO" id="GO:0005737">
    <property type="term" value="C:cytoplasm"/>
    <property type="evidence" value="ECO:0007669"/>
    <property type="project" value="UniProtKB-SubCell"/>
</dbReference>
<dbReference type="GO" id="GO:0009791">
    <property type="term" value="P:post-embryonic development"/>
    <property type="evidence" value="ECO:0000318"/>
    <property type="project" value="GO_Central"/>
</dbReference>
<dbReference type="InterPro" id="IPR026317">
    <property type="entry name" value="P_C10"/>
</dbReference>
<dbReference type="PANTHER" id="PTHR13463">
    <property type="entry name" value="PROTEIN C10"/>
    <property type="match status" value="1"/>
</dbReference>
<dbReference type="PANTHER" id="PTHR13463:SF3">
    <property type="entry name" value="PROTEIN C10"/>
    <property type="match status" value="1"/>
</dbReference>
<dbReference type="Pfam" id="PF14974">
    <property type="entry name" value="P_C10"/>
    <property type="match status" value="1"/>
</dbReference>
<organism>
    <name type="scientific">Danio rerio</name>
    <name type="common">Zebrafish</name>
    <name type="synonym">Brachydanio rerio</name>
    <dbReference type="NCBI Taxonomy" id="7955"/>
    <lineage>
        <taxon>Eukaryota</taxon>
        <taxon>Metazoa</taxon>
        <taxon>Chordata</taxon>
        <taxon>Craniata</taxon>
        <taxon>Vertebrata</taxon>
        <taxon>Euteleostomi</taxon>
        <taxon>Actinopterygii</taxon>
        <taxon>Neopterygii</taxon>
        <taxon>Teleostei</taxon>
        <taxon>Ostariophysi</taxon>
        <taxon>Cypriniformes</taxon>
        <taxon>Danionidae</taxon>
        <taxon>Danioninae</taxon>
        <taxon>Danio</taxon>
    </lineage>
</organism>
<accession>Q6TH01</accession>
<gene>
    <name type="ORF">si:dkey-29f10.1</name>
    <name type="ORF">zgc:86838</name>
</gene>
<proteinExistence type="evidence at transcript level"/>
<feature type="chain" id="PRO_0000294479" description="Protein C10">
    <location>
        <begin position="1"/>
        <end position="122"/>
    </location>
</feature>
<evidence type="ECO:0000250" key="1"/>
<evidence type="ECO:0000305" key="2"/>
<comment type="subcellular location">
    <subcellularLocation>
        <location evidence="1">Cytoplasm</location>
    </subcellularLocation>
</comment>
<comment type="similarity">
    <text evidence="2">Belongs to the UPF0456 family.</text>
</comment>